<evidence type="ECO:0000255" key="1">
    <source>
        <dbReference type="HAMAP-Rule" id="MF_01609"/>
    </source>
</evidence>
<evidence type="ECO:0000305" key="2"/>
<gene>
    <name type="ordered locus">MSMEG_3326</name>
    <name type="ordered locus">MSMEI_3241</name>
</gene>
<accession>A0QXJ6</accession>
<accession>I7GB00</accession>
<comment type="function">
    <text evidence="1">ATP-dependent carboxylate-amine ligase which exhibits weak glutamate--cysteine ligase activity.</text>
</comment>
<comment type="catalytic activity">
    <reaction evidence="1">
        <text>L-cysteine + L-glutamate + ATP = gamma-L-glutamyl-L-cysteine + ADP + phosphate + H(+)</text>
        <dbReference type="Rhea" id="RHEA:13285"/>
        <dbReference type="ChEBI" id="CHEBI:15378"/>
        <dbReference type="ChEBI" id="CHEBI:29985"/>
        <dbReference type="ChEBI" id="CHEBI:30616"/>
        <dbReference type="ChEBI" id="CHEBI:35235"/>
        <dbReference type="ChEBI" id="CHEBI:43474"/>
        <dbReference type="ChEBI" id="CHEBI:58173"/>
        <dbReference type="ChEBI" id="CHEBI:456216"/>
        <dbReference type="EC" id="6.3.2.2"/>
    </reaction>
</comment>
<comment type="similarity">
    <text evidence="1">Belongs to the glutamate--cysteine ligase type 2 family. YbdK subfamily.</text>
</comment>
<comment type="sequence caution" evidence="2">
    <conflict type="erroneous initiation">
        <sequence resource="EMBL-CDS" id="AFP39704"/>
    </conflict>
    <text>Truncated N-terminus.</text>
</comment>
<organism>
    <name type="scientific">Mycolicibacterium smegmatis (strain ATCC 700084 / mc(2)155)</name>
    <name type="common">Mycobacterium smegmatis</name>
    <dbReference type="NCBI Taxonomy" id="246196"/>
    <lineage>
        <taxon>Bacteria</taxon>
        <taxon>Bacillati</taxon>
        <taxon>Actinomycetota</taxon>
        <taxon>Actinomycetes</taxon>
        <taxon>Mycobacteriales</taxon>
        <taxon>Mycobacteriaceae</taxon>
        <taxon>Mycolicibacterium</taxon>
    </lineage>
</organism>
<protein>
    <recommendedName>
        <fullName evidence="1">Putative glutamate--cysteine ligase 2-2</fullName>
        <ecNumber evidence="1">6.3.2.2</ecNumber>
    </recommendedName>
    <alternativeName>
        <fullName evidence="1">Gamma-glutamylcysteine synthetase 2-2</fullName>
        <shortName evidence="1">GCS 2-2</shortName>
        <shortName evidence="1">Gamma-GCS 2-2</shortName>
    </alternativeName>
</protein>
<feature type="chain" id="PRO_0000323506" description="Putative glutamate--cysteine ligase 2-2">
    <location>
        <begin position="1"/>
        <end position="396"/>
    </location>
</feature>
<dbReference type="EC" id="6.3.2.2" evidence="1"/>
<dbReference type="EMBL" id="CP000480">
    <property type="protein sequence ID" value="ABK70098.1"/>
    <property type="molecule type" value="Genomic_DNA"/>
</dbReference>
<dbReference type="EMBL" id="CP001663">
    <property type="protein sequence ID" value="AFP39704.1"/>
    <property type="status" value="ALT_INIT"/>
    <property type="molecule type" value="Genomic_DNA"/>
</dbReference>
<dbReference type="RefSeq" id="WP_003894734.1">
    <property type="nucleotide sequence ID" value="NZ_SIJM01000015.1"/>
</dbReference>
<dbReference type="RefSeq" id="YP_887634.1">
    <property type="nucleotide sequence ID" value="NC_008596.1"/>
</dbReference>
<dbReference type="SMR" id="A0QXJ6"/>
<dbReference type="STRING" id="246196.MSMEG_3326"/>
<dbReference type="PaxDb" id="246196-MSMEI_3241"/>
<dbReference type="KEGG" id="msb:LJ00_16530"/>
<dbReference type="KEGG" id="msg:MSMEI_3241"/>
<dbReference type="KEGG" id="msm:MSMEG_3326"/>
<dbReference type="PATRIC" id="fig|246196.19.peg.3284"/>
<dbReference type="eggNOG" id="COG2170">
    <property type="taxonomic scope" value="Bacteria"/>
</dbReference>
<dbReference type="OrthoDB" id="9803842at2"/>
<dbReference type="Proteomes" id="UP000000757">
    <property type="component" value="Chromosome"/>
</dbReference>
<dbReference type="Proteomes" id="UP000006158">
    <property type="component" value="Chromosome"/>
</dbReference>
<dbReference type="GO" id="GO:0005524">
    <property type="term" value="F:ATP binding"/>
    <property type="evidence" value="ECO:0007669"/>
    <property type="project" value="UniProtKB-KW"/>
</dbReference>
<dbReference type="GO" id="GO:0004357">
    <property type="term" value="F:glutamate-cysteine ligase activity"/>
    <property type="evidence" value="ECO:0007669"/>
    <property type="project" value="UniProtKB-EC"/>
</dbReference>
<dbReference type="GO" id="GO:0042398">
    <property type="term" value="P:modified amino acid biosynthetic process"/>
    <property type="evidence" value="ECO:0007669"/>
    <property type="project" value="InterPro"/>
</dbReference>
<dbReference type="Gene3D" id="3.30.590.20">
    <property type="match status" value="1"/>
</dbReference>
<dbReference type="HAMAP" id="MF_01609">
    <property type="entry name" value="Glu_cys_ligase_2"/>
    <property type="match status" value="1"/>
</dbReference>
<dbReference type="InterPro" id="IPR050141">
    <property type="entry name" value="GCL_type2/YbdK_subfam"/>
</dbReference>
<dbReference type="InterPro" id="IPR006336">
    <property type="entry name" value="GCS2"/>
</dbReference>
<dbReference type="InterPro" id="IPR014746">
    <property type="entry name" value="Gln_synth/guanido_kin_cat_dom"/>
</dbReference>
<dbReference type="InterPro" id="IPR011793">
    <property type="entry name" value="YbdK"/>
</dbReference>
<dbReference type="NCBIfam" id="TIGR02050">
    <property type="entry name" value="gshA_cyan_rel"/>
    <property type="match status" value="1"/>
</dbReference>
<dbReference type="NCBIfam" id="NF010041">
    <property type="entry name" value="PRK13517.1-1"/>
    <property type="match status" value="1"/>
</dbReference>
<dbReference type="PANTHER" id="PTHR36510">
    <property type="entry name" value="GLUTAMATE--CYSTEINE LIGASE 2-RELATED"/>
    <property type="match status" value="1"/>
</dbReference>
<dbReference type="PANTHER" id="PTHR36510:SF1">
    <property type="entry name" value="GLUTAMATE--CYSTEINE LIGASE 2-RELATED"/>
    <property type="match status" value="1"/>
</dbReference>
<dbReference type="Pfam" id="PF04107">
    <property type="entry name" value="GCS2"/>
    <property type="match status" value="1"/>
</dbReference>
<dbReference type="SUPFAM" id="SSF55931">
    <property type="entry name" value="Glutamine synthetase/guanido kinase"/>
    <property type="match status" value="1"/>
</dbReference>
<sequence length="396" mass="42680">MRECRSQEASGQLTFAKTPRTVGIEEEFHLVDLTTRRLATRAPELLPLLPDGYVAELQSCVVETNGSVVSTLPELRADLTARRRVLVDTAATLGLGVVAAGAVPLSVPSEMRVTQTSRYQQMLADYQLLAREQLICGTQIHVGIDDPDESVLVAGRVAAYVPTLLALSASSPFWSDGSDTGYSSVRTLVWQRWPTTGLAPPATSAAEYDALISDLIATGVITDAGMSYFDVRPALRTPTLELRVCDSCPRADTIVLIAALFRALVEREIEGLRAGVPAAIVVPPLGRAALWRAARSGLEGDLVDLIHPASRPAGDVVTDLVQMLRPQLEASRDWQTVEELARRALAEGSSAARQRRAMRMRNSLLDVVDHLIAETADVATVANDALPTQRNGSDRG</sequence>
<proteinExistence type="inferred from homology"/>
<name>GCS22_MYCS2</name>
<keyword id="KW-0067">ATP-binding</keyword>
<keyword id="KW-0436">Ligase</keyword>
<keyword id="KW-0547">Nucleotide-binding</keyword>
<keyword id="KW-1185">Reference proteome</keyword>
<reference key="1">
    <citation type="submission" date="2006-10" db="EMBL/GenBank/DDBJ databases">
        <authorList>
            <person name="Fleischmann R.D."/>
            <person name="Dodson R.J."/>
            <person name="Haft D.H."/>
            <person name="Merkel J.S."/>
            <person name="Nelson W.C."/>
            <person name="Fraser C.M."/>
        </authorList>
    </citation>
    <scope>NUCLEOTIDE SEQUENCE [LARGE SCALE GENOMIC DNA]</scope>
    <source>
        <strain>ATCC 700084 / mc(2)155</strain>
    </source>
</reference>
<reference key="2">
    <citation type="journal article" date="2007" name="Genome Biol.">
        <title>Interrupted coding sequences in Mycobacterium smegmatis: authentic mutations or sequencing errors?</title>
        <authorList>
            <person name="Deshayes C."/>
            <person name="Perrodou E."/>
            <person name="Gallien S."/>
            <person name="Euphrasie D."/>
            <person name="Schaeffer C."/>
            <person name="Van-Dorsselaer A."/>
            <person name="Poch O."/>
            <person name="Lecompte O."/>
            <person name="Reyrat J.-M."/>
        </authorList>
    </citation>
    <scope>NUCLEOTIDE SEQUENCE [LARGE SCALE GENOMIC DNA]</scope>
    <source>
        <strain>ATCC 700084 / mc(2)155</strain>
    </source>
</reference>
<reference key="3">
    <citation type="journal article" date="2009" name="Genome Res.">
        <title>Ortho-proteogenomics: multiple proteomes investigation through orthology and a new MS-based protocol.</title>
        <authorList>
            <person name="Gallien S."/>
            <person name="Perrodou E."/>
            <person name="Carapito C."/>
            <person name="Deshayes C."/>
            <person name="Reyrat J.-M."/>
            <person name="Van Dorsselaer A."/>
            <person name="Poch O."/>
            <person name="Schaeffer C."/>
            <person name="Lecompte O."/>
        </authorList>
    </citation>
    <scope>NUCLEOTIDE SEQUENCE [LARGE SCALE GENOMIC DNA]</scope>
    <source>
        <strain>ATCC 700084 / mc(2)155</strain>
    </source>
</reference>